<proteinExistence type="evidence at transcript level"/>
<reference key="1">
    <citation type="submission" date="2005-12" db="EMBL/GenBank/DDBJ databases">
        <title>Molecular cloning and expression pattern of the Dmrt5 gene during embryonic development.</title>
        <authorList>
            <person name="Moers V.M."/>
            <person name="Bellefroid E.J."/>
        </authorList>
    </citation>
    <scope>NUCLEOTIDE SEQUENCE [MRNA]</scope>
</reference>
<comment type="function">
    <text>May be involved in sexual development.</text>
</comment>
<comment type="subcellular location">
    <subcellularLocation>
        <location evidence="2">Nucleus</location>
    </subcellularLocation>
</comment>
<comment type="similarity">
    <text evidence="4">Belongs to the DMRT family.</text>
</comment>
<sequence length="437" mass="46522">MELNGPPSSQVPHTPTCAPSLPITVAGTLLRGPQLLLRAAEKYPRTPKCARCRNHGVVSALKGHKRYCRWKDCMCAKCTLIAERQRVMAAQVALRRQQAQEENEARELQLLYGTAEGLALAAANGILPPRPAYEVFGSLCGEGGTDSKIQKFDLFPKSLIPRSMTPQLPSGGKPGSPDSEPVSGSAPGASSPEAQPGSGSENGDGESLLSSPISKELKEGEESPSLISPLSSESGSDAEKDEQDPSSSSLARQRTPINILTRVFPAQKRSVLELVLQGCGGDVVQAIEQILNNRSQDKGEGTWSKDGALQSIQPSVSSTHRPLIAGALTPAIGTIGSRSAFSPLQPNAAHFGTEANTYQLGGHIGLNPLRLAYSAHSRGLAFMAPYSTAGFMPTLGFRPPMDYAFSDLMRDRANVHKDQVYTNGLYGPVVNNNAEKQ</sequence>
<accession>Q2MJB4</accession>
<gene>
    <name type="primary">dmrta2</name>
    <name type="synonym">dmrt5</name>
</gene>
<feature type="chain" id="PRO_0000333780" description="Doublesex- and mab-3-related transcription factor A2">
    <location>
        <begin position="1"/>
        <end position="437"/>
    </location>
</feature>
<feature type="domain" description="DMA" evidence="1">
    <location>
        <begin position="254"/>
        <end position="289"/>
    </location>
</feature>
<feature type="DNA-binding region" description="DM" evidence="2">
    <location>
        <begin position="49"/>
        <end position="96"/>
    </location>
</feature>
<feature type="region of interest" description="Disordered" evidence="3">
    <location>
        <begin position="160"/>
        <end position="253"/>
    </location>
</feature>
<feature type="compositionally biased region" description="Low complexity" evidence="3">
    <location>
        <begin position="179"/>
        <end position="201"/>
    </location>
</feature>
<feature type="compositionally biased region" description="Low complexity" evidence="3">
    <location>
        <begin position="223"/>
        <end position="235"/>
    </location>
</feature>
<keyword id="KW-0238">DNA-binding</keyword>
<keyword id="KW-0479">Metal-binding</keyword>
<keyword id="KW-0539">Nucleus</keyword>
<keyword id="KW-1185">Reference proteome</keyword>
<keyword id="KW-0862">Zinc</keyword>
<protein>
    <recommendedName>
        <fullName>Doublesex- and mab-3-related transcription factor A2</fullName>
    </recommendedName>
    <alternativeName>
        <fullName>Doublesex- and mab-3-related transcription factor 5</fullName>
    </alternativeName>
</protein>
<dbReference type="EMBL" id="DQ329358">
    <property type="protein sequence ID" value="ABC55871.1"/>
    <property type="molecule type" value="mRNA"/>
</dbReference>
<dbReference type="RefSeq" id="NP_001089148.1">
    <property type="nucleotide sequence ID" value="NM_001095679.1"/>
</dbReference>
<dbReference type="SMR" id="Q2MJB4"/>
<dbReference type="GeneID" id="734181"/>
<dbReference type="KEGG" id="xla:734181"/>
<dbReference type="AGR" id="Xenbase:XB-GENE-997967"/>
<dbReference type="CTD" id="734181"/>
<dbReference type="Xenbase" id="XB-GENE-997967">
    <property type="gene designation" value="dmrta2.S"/>
</dbReference>
<dbReference type="OrthoDB" id="9942608at2759"/>
<dbReference type="Proteomes" id="UP000186698">
    <property type="component" value="Chromosome 4S"/>
</dbReference>
<dbReference type="Bgee" id="734181">
    <property type="expression patterns" value="Expressed in neurula embryo and 3 other cell types or tissues"/>
</dbReference>
<dbReference type="GO" id="GO:0005634">
    <property type="term" value="C:nucleus"/>
    <property type="evidence" value="ECO:0000318"/>
    <property type="project" value="GO_Central"/>
</dbReference>
<dbReference type="GO" id="GO:0000981">
    <property type="term" value="F:DNA-binding transcription factor activity, RNA polymerase II-specific"/>
    <property type="evidence" value="ECO:0000318"/>
    <property type="project" value="GO_Central"/>
</dbReference>
<dbReference type="GO" id="GO:0046872">
    <property type="term" value="F:metal ion binding"/>
    <property type="evidence" value="ECO:0007669"/>
    <property type="project" value="UniProtKB-KW"/>
</dbReference>
<dbReference type="GO" id="GO:0000978">
    <property type="term" value="F:RNA polymerase II cis-regulatory region sequence-specific DNA binding"/>
    <property type="evidence" value="ECO:0000318"/>
    <property type="project" value="GO_Central"/>
</dbReference>
<dbReference type="GO" id="GO:0007281">
    <property type="term" value="P:germ cell development"/>
    <property type="evidence" value="ECO:0007669"/>
    <property type="project" value="TreeGrafter"/>
</dbReference>
<dbReference type="GO" id="GO:0022008">
    <property type="term" value="P:neurogenesis"/>
    <property type="evidence" value="ECO:0000315"/>
    <property type="project" value="CACAO"/>
</dbReference>
<dbReference type="GO" id="GO:0006357">
    <property type="term" value="P:regulation of transcription by RNA polymerase II"/>
    <property type="evidence" value="ECO:0000318"/>
    <property type="project" value="GO_Central"/>
</dbReference>
<dbReference type="GO" id="GO:0007548">
    <property type="term" value="P:sex differentiation"/>
    <property type="evidence" value="ECO:0000318"/>
    <property type="project" value="GO_Central"/>
</dbReference>
<dbReference type="CDD" id="cd14418">
    <property type="entry name" value="CUE_DMA_DMRTA2"/>
    <property type="match status" value="1"/>
</dbReference>
<dbReference type="FunFam" id="4.10.1040.10:FF:000001">
    <property type="entry name" value="doublesex- and mab-3-related transcription factor 1"/>
    <property type="match status" value="1"/>
</dbReference>
<dbReference type="Gene3D" id="4.10.1040.10">
    <property type="entry name" value="DM DNA-binding domain"/>
    <property type="match status" value="1"/>
</dbReference>
<dbReference type="InterPro" id="IPR001275">
    <property type="entry name" value="DM_DNA-bd"/>
</dbReference>
<dbReference type="InterPro" id="IPR036407">
    <property type="entry name" value="DM_DNA-bd_sf"/>
</dbReference>
<dbReference type="InterPro" id="IPR005173">
    <property type="entry name" value="DMA"/>
</dbReference>
<dbReference type="InterPro" id="IPR026607">
    <property type="entry name" value="DMRT"/>
</dbReference>
<dbReference type="InterPro" id="IPR046472">
    <property type="entry name" value="DMRT5_1_DMB_dom"/>
</dbReference>
<dbReference type="InterPro" id="IPR009060">
    <property type="entry name" value="UBA-like_sf"/>
</dbReference>
<dbReference type="PANTHER" id="PTHR12322">
    <property type="entry name" value="DOUBLESEX AND MAB-3 RELATED TRANSCRIPTION FACTOR DMRT"/>
    <property type="match status" value="1"/>
</dbReference>
<dbReference type="PANTHER" id="PTHR12322:SF76">
    <property type="entry name" value="DOUBLESEX- AND MAB-3-RELATED TRANSCRIPTION FACTOR A2"/>
    <property type="match status" value="1"/>
</dbReference>
<dbReference type="Pfam" id="PF00751">
    <property type="entry name" value="DM"/>
    <property type="match status" value="1"/>
</dbReference>
<dbReference type="Pfam" id="PF03474">
    <property type="entry name" value="DMA"/>
    <property type="match status" value="1"/>
</dbReference>
<dbReference type="Pfam" id="PF20624">
    <property type="entry name" value="DMRT5_DMB"/>
    <property type="match status" value="1"/>
</dbReference>
<dbReference type="SMART" id="SM00301">
    <property type="entry name" value="DM"/>
    <property type="match status" value="1"/>
</dbReference>
<dbReference type="SUPFAM" id="SSF82927">
    <property type="entry name" value="Cysteine-rich DNA binding domain, (DM domain)"/>
    <property type="match status" value="1"/>
</dbReference>
<dbReference type="SUPFAM" id="SSF46934">
    <property type="entry name" value="UBA-like"/>
    <property type="match status" value="1"/>
</dbReference>
<dbReference type="PROSITE" id="PS40000">
    <property type="entry name" value="DM_1"/>
    <property type="match status" value="1"/>
</dbReference>
<dbReference type="PROSITE" id="PS50809">
    <property type="entry name" value="DM_2"/>
    <property type="match status" value="1"/>
</dbReference>
<name>DMTA2_XENLA</name>
<organism>
    <name type="scientific">Xenopus laevis</name>
    <name type="common">African clawed frog</name>
    <dbReference type="NCBI Taxonomy" id="8355"/>
    <lineage>
        <taxon>Eukaryota</taxon>
        <taxon>Metazoa</taxon>
        <taxon>Chordata</taxon>
        <taxon>Craniata</taxon>
        <taxon>Vertebrata</taxon>
        <taxon>Euteleostomi</taxon>
        <taxon>Amphibia</taxon>
        <taxon>Batrachia</taxon>
        <taxon>Anura</taxon>
        <taxon>Pipoidea</taxon>
        <taxon>Pipidae</taxon>
        <taxon>Xenopodinae</taxon>
        <taxon>Xenopus</taxon>
        <taxon>Xenopus</taxon>
    </lineage>
</organism>
<evidence type="ECO:0000255" key="1"/>
<evidence type="ECO:0000255" key="2">
    <source>
        <dbReference type="PROSITE-ProRule" id="PRU00070"/>
    </source>
</evidence>
<evidence type="ECO:0000256" key="3">
    <source>
        <dbReference type="SAM" id="MobiDB-lite"/>
    </source>
</evidence>
<evidence type="ECO:0000305" key="4"/>